<protein>
    <recommendedName>
        <fullName evidence="1">Large ribosomal subunit protein bL12</fullName>
    </recommendedName>
    <alternativeName>
        <fullName evidence="2">50S ribosomal protein L7/L12</fullName>
    </alternativeName>
</protein>
<gene>
    <name evidence="1" type="primary">rplL</name>
    <name type="ordered locus">BTH_I3077</name>
</gene>
<dbReference type="EMBL" id="CP000086">
    <property type="protein sequence ID" value="ABC37081.1"/>
    <property type="molecule type" value="Genomic_DNA"/>
</dbReference>
<dbReference type="RefSeq" id="WP_009888286.1">
    <property type="nucleotide sequence ID" value="NZ_CP008786.1"/>
</dbReference>
<dbReference type="SMR" id="Q2SU18"/>
<dbReference type="GeneID" id="45122765"/>
<dbReference type="KEGG" id="bte:BTH_I3077"/>
<dbReference type="HOGENOM" id="CLU_086499_3_2_4"/>
<dbReference type="Proteomes" id="UP000001930">
    <property type="component" value="Chromosome I"/>
</dbReference>
<dbReference type="GO" id="GO:0022625">
    <property type="term" value="C:cytosolic large ribosomal subunit"/>
    <property type="evidence" value="ECO:0007669"/>
    <property type="project" value="TreeGrafter"/>
</dbReference>
<dbReference type="GO" id="GO:0003729">
    <property type="term" value="F:mRNA binding"/>
    <property type="evidence" value="ECO:0007669"/>
    <property type="project" value="TreeGrafter"/>
</dbReference>
<dbReference type="GO" id="GO:0003735">
    <property type="term" value="F:structural constituent of ribosome"/>
    <property type="evidence" value="ECO:0007669"/>
    <property type="project" value="InterPro"/>
</dbReference>
<dbReference type="GO" id="GO:0006412">
    <property type="term" value="P:translation"/>
    <property type="evidence" value="ECO:0007669"/>
    <property type="project" value="UniProtKB-UniRule"/>
</dbReference>
<dbReference type="CDD" id="cd00387">
    <property type="entry name" value="Ribosomal_L7_L12"/>
    <property type="match status" value="1"/>
</dbReference>
<dbReference type="FunFam" id="3.30.1390.10:FF:000001">
    <property type="entry name" value="50S ribosomal protein L7/L12"/>
    <property type="match status" value="1"/>
</dbReference>
<dbReference type="Gene3D" id="3.30.1390.10">
    <property type="match status" value="1"/>
</dbReference>
<dbReference type="Gene3D" id="1.20.5.710">
    <property type="entry name" value="Single helix bin"/>
    <property type="match status" value="1"/>
</dbReference>
<dbReference type="HAMAP" id="MF_00368">
    <property type="entry name" value="Ribosomal_bL12"/>
    <property type="match status" value="1"/>
</dbReference>
<dbReference type="InterPro" id="IPR000206">
    <property type="entry name" value="Ribosomal_bL12"/>
</dbReference>
<dbReference type="InterPro" id="IPR013823">
    <property type="entry name" value="Ribosomal_bL12_C"/>
</dbReference>
<dbReference type="InterPro" id="IPR014719">
    <property type="entry name" value="Ribosomal_bL12_C/ClpS-like"/>
</dbReference>
<dbReference type="InterPro" id="IPR008932">
    <property type="entry name" value="Ribosomal_bL12_oligo"/>
</dbReference>
<dbReference type="InterPro" id="IPR036235">
    <property type="entry name" value="Ribosomal_bL12_oligo_N_sf"/>
</dbReference>
<dbReference type="NCBIfam" id="TIGR00855">
    <property type="entry name" value="L12"/>
    <property type="match status" value="1"/>
</dbReference>
<dbReference type="PANTHER" id="PTHR45987">
    <property type="entry name" value="39S RIBOSOMAL PROTEIN L12"/>
    <property type="match status" value="1"/>
</dbReference>
<dbReference type="PANTHER" id="PTHR45987:SF4">
    <property type="entry name" value="LARGE RIBOSOMAL SUBUNIT PROTEIN BL12M"/>
    <property type="match status" value="1"/>
</dbReference>
<dbReference type="Pfam" id="PF00542">
    <property type="entry name" value="Ribosomal_L12"/>
    <property type="match status" value="1"/>
</dbReference>
<dbReference type="Pfam" id="PF16320">
    <property type="entry name" value="Ribosomal_L12_N"/>
    <property type="match status" value="1"/>
</dbReference>
<dbReference type="SUPFAM" id="SSF54736">
    <property type="entry name" value="ClpS-like"/>
    <property type="match status" value="1"/>
</dbReference>
<dbReference type="SUPFAM" id="SSF48300">
    <property type="entry name" value="Ribosomal protein L7/12, oligomerisation (N-terminal) domain"/>
    <property type="match status" value="1"/>
</dbReference>
<proteinExistence type="inferred from homology"/>
<name>RL7_BURTA</name>
<organism>
    <name type="scientific">Burkholderia thailandensis (strain ATCC 700388 / DSM 13276 / CCUG 48851 / CIP 106301 / E264)</name>
    <dbReference type="NCBI Taxonomy" id="271848"/>
    <lineage>
        <taxon>Bacteria</taxon>
        <taxon>Pseudomonadati</taxon>
        <taxon>Pseudomonadota</taxon>
        <taxon>Betaproteobacteria</taxon>
        <taxon>Burkholderiales</taxon>
        <taxon>Burkholderiaceae</taxon>
        <taxon>Burkholderia</taxon>
        <taxon>pseudomallei group</taxon>
    </lineage>
</organism>
<evidence type="ECO:0000255" key="1">
    <source>
        <dbReference type="HAMAP-Rule" id="MF_00368"/>
    </source>
</evidence>
<evidence type="ECO:0000305" key="2"/>
<sequence>MAIAKEDILAAVEGMTVLELNELVKAFEEKFGVSAAAVAVAGPAAGGAAAAAEEKTEFTVVLAEAGSNKVAVIKAVRELTGLGLKEAKDLVDGAPKPVKEGVDKAAADEAKKKLEDAGAKVEVK</sequence>
<feature type="chain" id="PRO_0000243404" description="Large ribosomal subunit protein bL12">
    <location>
        <begin position="1"/>
        <end position="124"/>
    </location>
</feature>
<keyword id="KW-0687">Ribonucleoprotein</keyword>
<keyword id="KW-0689">Ribosomal protein</keyword>
<comment type="function">
    <text evidence="1">Forms part of the ribosomal stalk which helps the ribosome interact with GTP-bound translation factors. Is thus essential for accurate translation.</text>
</comment>
<comment type="subunit">
    <text evidence="1">Homodimer. Part of the ribosomal stalk of the 50S ribosomal subunit. Forms a multimeric L10(L12)X complex, where L10 forms an elongated spine to which 2 to 4 L12 dimers bind in a sequential fashion. Binds GTP-bound translation factors.</text>
</comment>
<comment type="similarity">
    <text evidence="1">Belongs to the bacterial ribosomal protein bL12 family.</text>
</comment>
<reference key="1">
    <citation type="journal article" date="2005" name="BMC Genomics">
        <title>Bacterial genome adaptation to niches: divergence of the potential virulence genes in three Burkholderia species of different survival strategies.</title>
        <authorList>
            <person name="Kim H.S."/>
            <person name="Schell M.A."/>
            <person name="Yu Y."/>
            <person name="Ulrich R.L."/>
            <person name="Sarria S.H."/>
            <person name="Nierman W.C."/>
            <person name="DeShazer D."/>
        </authorList>
    </citation>
    <scope>NUCLEOTIDE SEQUENCE [LARGE SCALE GENOMIC DNA]</scope>
    <source>
        <strain>ATCC 700388 / DSM 13276 / CCUG 48851 / CIP 106301 / E264</strain>
    </source>
</reference>
<accession>Q2SU18</accession>